<proteinExistence type="inferred from homology"/>
<reference key="1">
    <citation type="journal article" date="2007" name="Proc. Natl. Acad. Sci. U.S.A.">
        <title>Genome and proteome of long-chain alkane degrading Geobacillus thermodenitrificans NG80-2 isolated from a deep-subsurface oil reservoir.</title>
        <authorList>
            <person name="Feng L."/>
            <person name="Wang W."/>
            <person name="Cheng J."/>
            <person name="Ren Y."/>
            <person name="Zhao G."/>
            <person name="Gao C."/>
            <person name="Tang Y."/>
            <person name="Liu X."/>
            <person name="Han W."/>
            <person name="Peng X."/>
            <person name="Liu R."/>
            <person name="Wang L."/>
        </authorList>
    </citation>
    <scope>NUCLEOTIDE SEQUENCE [LARGE SCALE GENOMIC DNA]</scope>
    <source>
        <strain>NG80-2</strain>
    </source>
</reference>
<name>MNMA_GEOTN</name>
<keyword id="KW-0067">ATP-binding</keyword>
<keyword id="KW-0963">Cytoplasm</keyword>
<keyword id="KW-1015">Disulfide bond</keyword>
<keyword id="KW-0547">Nucleotide-binding</keyword>
<keyword id="KW-0694">RNA-binding</keyword>
<keyword id="KW-0808">Transferase</keyword>
<keyword id="KW-0819">tRNA processing</keyword>
<keyword id="KW-0820">tRNA-binding</keyword>
<dbReference type="EC" id="2.8.1.13" evidence="1"/>
<dbReference type="EMBL" id="CP000557">
    <property type="protein sequence ID" value="ABO67841.1"/>
    <property type="molecule type" value="Genomic_DNA"/>
</dbReference>
<dbReference type="RefSeq" id="WP_008881022.1">
    <property type="nucleotide sequence ID" value="NC_009328.1"/>
</dbReference>
<dbReference type="SMR" id="A4IR87"/>
<dbReference type="KEGG" id="gtn:GTNG_2496"/>
<dbReference type="eggNOG" id="COG0482">
    <property type="taxonomic scope" value="Bacteria"/>
</dbReference>
<dbReference type="HOGENOM" id="CLU_035188_1_0_9"/>
<dbReference type="Proteomes" id="UP000001578">
    <property type="component" value="Chromosome"/>
</dbReference>
<dbReference type="GO" id="GO:0005737">
    <property type="term" value="C:cytoplasm"/>
    <property type="evidence" value="ECO:0007669"/>
    <property type="project" value="UniProtKB-SubCell"/>
</dbReference>
<dbReference type="GO" id="GO:0005524">
    <property type="term" value="F:ATP binding"/>
    <property type="evidence" value="ECO:0007669"/>
    <property type="project" value="UniProtKB-KW"/>
</dbReference>
<dbReference type="GO" id="GO:0000049">
    <property type="term" value="F:tRNA binding"/>
    <property type="evidence" value="ECO:0007669"/>
    <property type="project" value="UniProtKB-KW"/>
</dbReference>
<dbReference type="GO" id="GO:0103016">
    <property type="term" value="F:tRNA-uridine 2-sulfurtransferase activity"/>
    <property type="evidence" value="ECO:0007669"/>
    <property type="project" value="UniProtKB-EC"/>
</dbReference>
<dbReference type="GO" id="GO:0002143">
    <property type="term" value="P:tRNA wobble position uridine thiolation"/>
    <property type="evidence" value="ECO:0007669"/>
    <property type="project" value="TreeGrafter"/>
</dbReference>
<dbReference type="CDD" id="cd01998">
    <property type="entry name" value="MnmA_TRMU-like"/>
    <property type="match status" value="1"/>
</dbReference>
<dbReference type="FunFam" id="2.30.30.280:FF:000001">
    <property type="entry name" value="tRNA-specific 2-thiouridylase MnmA"/>
    <property type="match status" value="1"/>
</dbReference>
<dbReference type="FunFam" id="2.40.30.10:FF:000023">
    <property type="entry name" value="tRNA-specific 2-thiouridylase MnmA"/>
    <property type="match status" value="1"/>
</dbReference>
<dbReference type="FunFam" id="3.40.50.620:FF:000004">
    <property type="entry name" value="tRNA-specific 2-thiouridylase MnmA"/>
    <property type="match status" value="1"/>
</dbReference>
<dbReference type="Gene3D" id="2.30.30.280">
    <property type="entry name" value="Adenine nucleotide alpha hydrolases-like domains"/>
    <property type="match status" value="1"/>
</dbReference>
<dbReference type="Gene3D" id="3.40.50.620">
    <property type="entry name" value="HUPs"/>
    <property type="match status" value="1"/>
</dbReference>
<dbReference type="Gene3D" id="2.40.30.10">
    <property type="entry name" value="Translation factors"/>
    <property type="match status" value="1"/>
</dbReference>
<dbReference type="HAMAP" id="MF_00144">
    <property type="entry name" value="tRNA_thiouridyl_MnmA"/>
    <property type="match status" value="1"/>
</dbReference>
<dbReference type="InterPro" id="IPR004506">
    <property type="entry name" value="MnmA-like"/>
</dbReference>
<dbReference type="InterPro" id="IPR046885">
    <property type="entry name" value="MnmA-like_C"/>
</dbReference>
<dbReference type="InterPro" id="IPR046884">
    <property type="entry name" value="MnmA-like_central"/>
</dbReference>
<dbReference type="InterPro" id="IPR023382">
    <property type="entry name" value="MnmA-like_central_sf"/>
</dbReference>
<dbReference type="InterPro" id="IPR014729">
    <property type="entry name" value="Rossmann-like_a/b/a_fold"/>
</dbReference>
<dbReference type="NCBIfam" id="NF001138">
    <property type="entry name" value="PRK00143.1"/>
    <property type="match status" value="1"/>
</dbReference>
<dbReference type="NCBIfam" id="TIGR00420">
    <property type="entry name" value="trmU"/>
    <property type="match status" value="1"/>
</dbReference>
<dbReference type="PANTHER" id="PTHR11933:SF5">
    <property type="entry name" value="MITOCHONDRIAL TRNA-SPECIFIC 2-THIOURIDYLASE 1"/>
    <property type="match status" value="1"/>
</dbReference>
<dbReference type="PANTHER" id="PTHR11933">
    <property type="entry name" value="TRNA 5-METHYLAMINOMETHYL-2-THIOURIDYLATE -METHYLTRANSFERASE"/>
    <property type="match status" value="1"/>
</dbReference>
<dbReference type="Pfam" id="PF03054">
    <property type="entry name" value="tRNA_Me_trans"/>
    <property type="match status" value="1"/>
</dbReference>
<dbReference type="Pfam" id="PF20258">
    <property type="entry name" value="tRNA_Me_trans_C"/>
    <property type="match status" value="1"/>
</dbReference>
<dbReference type="Pfam" id="PF20259">
    <property type="entry name" value="tRNA_Me_trans_M"/>
    <property type="match status" value="1"/>
</dbReference>
<dbReference type="SUPFAM" id="SSF52402">
    <property type="entry name" value="Adenine nucleotide alpha hydrolases-like"/>
    <property type="match status" value="1"/>
</dbReference>
<comment type="function">
    <text evidence="1">Catalyzes the 2-thiolation of uridine at the wobble position (U34) of tRNA, leading to the formation of s(2)U34.</text>
</comment>
<comment type="catalytic activity">
    <reaction evidence="1">
        <text>S-sulfanyl-L-cysteinyl-[protein] + uridine(34) in tRNA + AH2 + ATP = 2-thiouridine(34) in tRNA + L-cysteinyl-[protein] + A + AMP + diphosphate + H(+)</text>
        <dbReference type="Rhea" id="RHEA:47032"/>
        <dbReference type="Rhea" id="RHEA-COMP:10131"/>
        <dbReference type="Rhea" id="RHEA-COMP:11726"/>
        <dbReference type="Rhea" id="RHEA-COMP:11727"/>
        <dbReference type="Rhea" id="RHEA-COMP:11728"/>
        <dbReference type="ChEBI" id="CHEBI:13193"/>
        <dbReference type="ChEBI" id="CHEBI:15378"/>
        <dbReference type="ChEBI" id="CHEBI:17499"/>
        <dbReference type="ChEBI" id="CHEBI:29950"/>
        <dbReference type="ChEBI" id="CHEBI:30616"/>
        <dbReference type="ChEBI" id="CHEBI:33019"/>
        <dbReference type="ChEBI" id="CHEBI:61963"/>
        <dbReference type="ChEBI" id="CHEBI:65315"/>
        <dbReference type="ChEBI" id="CHEBI:87170"/>
        <dbReference type="ChEBI" id="CHEBI:456215"/>
        <dbReference type="EC" id="2.8.1.13"/>
    </reaction>
</comment>
<comment type="subcellular location">
    <subcellularLocation>
        <location evidence="1">Cytoplasm</location>
    </subcellularLocation>
</comment>
<comment type="similarity">
    <text evidence="1">Belongs to the MnmA/TRMU family.</text>
</comment>
<organism>
    <name type="scientific">Geobacillus thermodenitrificans (strain NG80-2)</name>
    <dbReference type="NCBI Taxonomy" id="420246"/>
    <lineage>
        <taxon>Bacteria</taxon>
        <taxon>Bacillati</taxon>
        <taxon>Bacillota</taxon>
        <taxon>Bacilli</taxon>
        <taxon>Bacillales</taxon>
        <taxon>Anoxybacillaceae</taxon>
        <taxon>Geobacillus</taxon>
    </lineage>
</organism>
<gene>
    <name evidence="1" type="primary">mnmA</name>
    <name type="synonym">trmU</name>
    <name type="ordered locus">GTNG_2496</name>
</gene>
<evidence type="ECO:0000255" key="1">
    <source>
        <dbReference type="HAMAP-Rule" id="MF_00144"/>
    </source>
</evidence>
<feature type="chain" id="PRO_1000009528" description="tRNA-specific 2-thiouridylase MnmA">
    <location>
        <begin position="1"/>
        <end position="371"/>
    </location>
</feature>
<feature type="region of interest" description="Interaction with target base in tRNA" evidence="1">
    <location>
        <begin position="99"/>
        <end position="101"/>
    </location>
</feature>
<feature type="region of interest" description="Interaction with tRNA" evidence="1">
    <location>
        <begin position="150"/>
        <end position="152"/>
    </location>
</feature>
<feature type="region of interest" description="Interaction with tRNA" evidence="1">
    <location>
        <begin position="308"/>
        <end position="309"/>
    </location>
</feature>
<feature type="active site" description="Nucleophile" evidence="1">
    <location>
        <position position="104"/>
    </location>
</feature>
<feature type="active site" description="Cysteine persulfide intermediate" evidence="1">
    <location>
        <position position="200"/>
    </location>
</feature>
<feature type="binding site" evidence="1">
    <location>
        <begin position="13"/>
        <end position="20"/>
    </location>
    <ligand>
        <name>ATP</name>
        <dbReference type="ChEBI" id="CHEBI:30616"/>
    </ligand>
</feature>
<feature type="binding site" evidence="1">
    <location>
        <position position="39"/>
    </location>
    <ligand>
        <name>ATP</name>
        <dbReference type="ChEBI" id="CHEBI:30616"/>
    </ligand>
</feature>
<feature type="binding site" evidence="1">
    <location>
        <position position="128"/>
    </location>
    <ligand>
        <name>ATP</name>
        <dbReference type="ChEBI" id="CHEBI:30616"/>
    </ligand>
</feature>
<feature type="site" description="Interaction with tRNA" evidence="1">
    <location>
        <position position="129"/>
    </location>
</feature>
<feature type="site" description="Interaction with tRNA" evidence="1">
    <location>
        <position position="341"/>
    </location>
</feature>
<feature type="disulfide bond" description="Alternate" evidence="1">
    <location>
        <begin position="104"/>
        <end position="200"/>
    </location>
</feature>
<sequence>MNKAPHETRVVVGMSGGVDSSVAALLLKEQGYDVIGIFMKNWDDTDENGVCTATEDYEDVVRVCNQIGIPYYAVNFEKQYWDKVFTYFLNEYKAGRTPNPDVMCNKEIKFKAFLEHAMSIGADYVATGHYARVEFRDGEYKMLRGADPNKDQTYFLNQLGQAQLSKVMFPIGHLQKADVRRIAKEAGLATAGKKDSTGICFIGERDFKEFLSHYLPAQPGVMKTLDGEVKGRHDGVMYYTIGQRHGLGIGGSGEPWFVVGKDVRENVLYVAQGFENEYLYSTSLKAVDVNWVSDRKPEAPFRCTAKFRYRQPDIGVMVHPLADGKAEVVFDAPARAVTPGQAVVFYNGDECLGGGTIDEVFRNGEKLWYVG</sequence>
<accession>A4IR87</accession>
<protein>
    <recommendedName>
        <fullName evidence="1">tRNA-specific 2-thiouridylase MnmA</fullName>
        <ecNumber evidence="1">2.8.1.13</ecNumber>
    </recommendedName>
</protein>